<proteinExistence type="evidence at protein level"/>
<protein>
    <recommendedName>
        <fullName>Peroxiredoxin-2B</fullName>
        <ecNumber evidence="1">1.11.1.25</ecNumber>
    </recommendedName>
    <alternativeName>
        <fullName evidence="5">Glutaredoxin-dependent peroxiredoxin</fullName>
    </alternativeName>
    <alternativeName>
        <fullName>Peroxiredoxin IIB</fullName>
    </alternativeName>
    <alternativeName>
        <fullName>Peroxiredoxin TPx1</fullName>
    </alternativeName>
    <alternativeName>
        <fullName>Thioredoxin peroxidase 2B</fullName>
    </alternativeName>
    <alternativeName>
        <fullName>Thioredoxin-dependent peroxidase 1</fullName>
    </alternativeName>
</protein>
<keyword id="KW-0025">Alternative splicing</keyword>
<keyword id="KW-0049">Antioxidant</keyword>
<keyword id="KW-0963">Cytoplasm</keyword>
<keyword id="KW-0560">Oxidoreductase</keyword>
<keyword id="KW-0575">Peroxidase</keyword>
<keyword id="KW-0676">Redox-active center</keyword>
<keyword id="KW-1185">Reference proteome</keyword>
<dbReference type="EC" id="1.11.1.25" evidence="1"/>
<dbReference type="EMBL" id="AF121355">
    <property type="protein sequence ID" value="AAD28242.1"/>
    <property type="molecule type" value="mRNA"/>
</dbReference>
<dbReference type="EMBL" id="AC009513">
    <property type="protein sequence ID" value="AAF06058.1"/>
    <property type="molecule type" value="Genomic_DNA"/>
</dbReference>
<dbReference type="EMBL" id="CP002684">
    <property type="protein sequence ID" value="AEE34447.1"/>
    <property type="molecule type" value="Genomic_DNA"/>
</dbReference>
<dbReference type="EMBL" id="AF332464">
    <property type="protein sequence ID" value="AAG48827.1"/>
    <property type="molecule type" value="mRNA"/>
</dbReference>
<dbReference type="EMBL" id="AY065056">
    <property type="protein sequence ID" value="AAL57690.1"/>
    <property type="molecule type" value="mRNA"/>
</dbReference>
<dbReference type="PIR" id="B96684">
    <property type="entry name" value="B96684"/>
</dbReference>
<dbReference type="PIR" id="PA0022">
    <property type="entry name" value="PA0022"/>
</dbReference>
<dbReference type="RefSeq" id="NP_176773.1">
    <molecule id="Q9XEX2-1"/>
    <property type="nucleotide sequence ID" value="NM_105270.3"/>
</dbReference>
<dbReference type="SMR" id="Q9XEX2"/>
<dbReference type="BioGRID" id="28131">
    <property type="interactions" value="1"/>
</dbReference>
<dbReference type="FunCoup" id="Q9XEX2">
    <property type="interactions" value="2453"/>
</dbReference>
<dbReference type="IntAct" id="Q9XEX2">
    <property type="interactions" value="2"/>
</dbReference>
<dbReference type="MINT" id="Q9XEX2"/>
<dbReference type="STRING" id="3702.Q9XEX2"/>
<dbReference type="PeroxiBase" id="14571">
    <property type="entry name" value="HaPNC17"/>
</dbReference>
<dbReference type="PeroxiBase" id="4344">
    <property type="entry name" value="AtPrxII02"/>
</dbReference>
<dbReference type="PaxDb" id="3702-AT1G65980.1"/>
<dbReference type="ProteomicsDB" id="226481">
    <molecule id="Q9XEX2-1"/>
</dbReference>
<dbReference type="EnsemblPlants" id="AT1G65980.1">
    <molecule id="Q9XEX2-1"/>
    <property type="protein sequence ID" value="AT1G65980.1"/>
    <property type="gene ID" value="AT1G65980"/>
</dbReference>
<dbReference type="GeneID" id="842910"/>
<dbReference type="Gramene" id="AT1G65980.1">
    <molecule id="Q9XEX2-1"/>
    <property type="protein sequence ID" value="AT1G65980.1"/>
    <property type="gene ID" value="AT1G65980"/>
</dbReference>
<dbReference type="KEGG" id="ath:AT1G65980"/>
<dbReference type="Araport" id="AT1G65980"/>
<dbReference type="TAIR" id="AT1G65980">
    <property type="gene designation" value="TPX1"/>
</dbReference>
<dbReference type="eggNOG" id="KOG0541">
    <property type="taxonomic scope" value="Eukaryota"/>
</dbReference>
<dbReference type="HOGENOM" id="CLU_072440_1_2_1"/>
<dbReference type="InParanoid" id="Q9XEX2"/>
<dbReference type="OMA" id="SAWGKQH"/>
<dbReference type="PhylomeDB" id="Q9XEX2"/>
<dbReference type="BioCyc" id="ARA:AT1G65980-MONOMER"/>
<dbReference type="BioCyc" id="MetaCyc:AT1G65980-MONOMER"/>
<dbReference type="CD-CODE" id="4299E36E">
    <property type="entry name" value="Nucleolus"/>
</dbReference>
<dbReference type="PRO" id="PR:Q9XEX2"/>
<dbReference type="Proteomes" id="UP000006548">
    <property type="component" value="Chromosome 1"/>
</dbReference>
<dbReference type="ExpressionAtlas" id="Q9XEX2">
    <property type="expression patterns" value="baseline and differential"/>
</dbReference>
<dbReference type="GO" id="GO:0009507">
    <property type="term" value="C:chloroplast"/>
    <property type="evidence" value="ECO:0007005"/>
    <property type="project" value="TAIR"/>
</dbReference>
<dbReference type="GO" id="GO:0005829">
    <property type="term" value="C:cytosol"/>
    <property type="evidence" value="ECO:0007005"/>
    <property type="project" value="TAIR"/>
</dbReference>
<dbReference type="GO" id="GO:0005634">
    <property type="term" value="C:nucleus"/>
    <property type="evidence" value="ECO:0007005"/>
    <property type="project" value="TAIR"/>
</dbReference>
<dbReference type="GO" id="GO:0005886">
    <property type="term" value="C:plasma membrane"/>
    <property type="evidence" value="ECO:0007005"/>
    <property type="project" value="TAIR"/>
</dbReference>
<dbReference type="GO" id="GO:0008379">
    <property type="term" value="F:thioredoxin peroxidase activity"/>
    <property type="evidence" value="ECO:0007669"/>
    <property type="project" value="InterPro"/>
</dbReference>
<dbReference type="GO" id="GO:0034599">
    <property type="term" value="P:cellular response to oxidative stress"/>
    <property type="evidence" value="ECO:0007669"/>
    <property type="project" value="InterPro"/>
</dbReference>
<dbReference type="CDD" id="cd03013">
    <property type="entry name" value="PRX5_like"/>
    <property type="match status" value="1"/>
</dbReference>
<dbReference type="FunFam" id="3.40.30.10:FF:000671">
    <property type="entry name" value="Pyruvate decarboxylase 2"/>
    <property type="match status" value="1"/>
</dbReference>
<dbReference type="Gene3D" id="3.40.30.10">
    <property type="entry name" value="Glutaredoxin"/>
    <property type="match status" value="1"/>
</dbReference>
<dbReference type="InterPro" id="IPR037944">
    <property type="entry name" value="PRX5-like"/>
</dbReference>
<dbReference type="InterPro" id="IPR013740">
    <property type="entry name" value="Redoxin"/>
</dbReference>
<dbReference type="InterPro" id="IPR036249">
    <property type="entry name" value="Thioredoxin-like_sf"/>
</dbReference>
<dbReference type="InterPro" id="IPR013766">
    <property type="entry name" value="Thioredoxin_domain"/>
</dbReference>
<dbReference type="PANTHER" id="PTHR10430">
    <property type="entry name" value="PEROXIREDOXIN"/>
    <property type="match status" value="1"/>
</dbReference>
<dbReference type="PANTHER" id="PTHR10430:SF8">
    <property type="entry name" value="PEROXIREDOXIN-2A-RELATED"/>
    <property type="match status" value="1"/>
</dbReference>
<dbReference type="Pfam" id="PF08534">
    <property type="entry name" value="Redoxin"/>
    <property type="match status" value="1"/>
</dbReference>
<dbReference type="SUPFAM" id="SSF52833">
    <property type="entry name" value="Thioredoxin-like"/>
    <property type="match status" value="1"/>
</dbReference>
<dbReference type="PROSITE" id="PS51352">
    <property type="entry name" value="THIOREDOXIN_2"/>
    <property type="match status" value="1"/>
</dbReference>
<comment type="function">
    <text evidence="3">Reduces hydrogen peroxide and alkyl hydroperoxides with reducing equivalents provided through the thioredoxin or glutaredoxin system. May be involved in intracellular redox signaling.</text>
</comment>
<comment type="function">
    <text evidence="3">Thiol-specific peroxidase that catalyzes the reduction of hydrogen peroxide and organic hydroperoxides to water and alcohols, respectively. Plays a role in cell protection against oxidative stress by detoxifying peroxides and as sensor of hydrogen peroxide-mediated signaling events.</text>
</comment>
<comment type="catalytic activity">
    <reaction evidence="1">
        <text>[glutaredoxin]-dithiol + a hydroperoxide = [glutaredoxin]-disulfide + an alcohol + H2O</text>
        <dbReference type="Rhea" id="RHEA:62624"/>
        <dbReference type="Rhea" id="RHEA-COMP:10729"/>
        <dbReference type="Rhea" id="RHEA-COMP:10730"/>
        <dbReference type="ChEBI" id="CHEBI:15377"/>
        <dbReference type="ChEBI" id="CHEBI:29950"/>
        <dbReference type="ChEBI" id="CHEBI:30879"/>
        <dbReference type="ChEBI" id="CHEBI:35924"/>
        <dbReference type="ChEBI" id="CHEBI:50058"/>
        <dbReference type="EC" id="1.11.1.25"/>
    </reaction>
</comment>
<comment type="subunit">
    <text evidence="3 4">Monomer.</text>
</comment>
<comment type="subcellular location">
    <subcellularLocation>
        <location evidence="3">Cytoplasm</location>
    </subcellularLocation>
</comment>
<comment type="alternative products">
    <event type="alternative splicing"/>
    <isoform>
        <id>Q9XEX2-1</id>
        <name>1</name>
        <sequence type="displayed"/>
    </isoform>
    <text>A number of isoforms are produced. According to EST sequences.</text>
</comment>
<comment type="tissue specificity">
    <text evidence="3 4">Expressed in all tissues but mostly in reproductive tissues such as buds, flowers, siliques and seeds.</text>
</comment>
<comment type="induction">
    <text evidence="4">Slightly induced by salt stress.</text>
</comment>
<comment type="miscellaneous">
    <text evidence="6">The active site is a conserved redox-active cysteine residue, the peroxidatic cysteine (C(P)), which makes the nucleophilic attack on the peroxide substrate. The peroxide oxidizes the C(P)-SH to cysteine sulfenic acid (C(P)-SOH), which then reacts with another cysteine residue, the resolving cysteine (C(R)), to form a disulfide bridge. The disulfide is subsequently reduced by an appropriate electron donor to complete the catalytic cycle. In this 1-Cys peroxiredoxin, no C(R) is present and C(P) instead forms a disulfide with a cysteine from another protein or with a small thiol molecule. C(P) is reactivated by glutaredoxin (Grx).</text>
</comment>
<comment type="similarity">
    <text evidence="5">Belongs to the peroxiredoxin family. Prx5 subfamily.</text>
</comment>
<name>PRX2B_ARATH</name>
<accession>Q9XEX2</accession>
<feature type="chain" id="PRO_0000282279" description="Peroxiredoxin-2B">
    <location>
        <begin position="1"/>
        <end position="162"/>
    </location>
</feature>
<feature type="domain" description="Thioredoxin" evidence="2">
    <location>
        <begin position="4"/>
        <end position="162"/>
    </location>
</feature>
<feature type="active site" description="Cysteine sulfenic acid (-SOH) intermediate" evidence="1">
    <location>
        <position position="51"/>
    </location>
</feature>
<sequence>MAPIAVGDVVPDGTISFFDENDQLQTASVHSLAAGKKVILFGVPGAFTPTCSMKHVPGFIEKAEELKSKGVDEIICFSVNDPFVMKAWGKTYPENKHVKFVADGSGEYTHLLGLELDLKDKGLGVRSRRFALLLDDLKVTVANVESGGEFTVSSADDILKAL</sequence>
<reference key="1">
    <citation type="journal article" date="1999" name="J. Biol. Chem.">
        <title>In vivo characterization of a thioredoxin H target protein defines a new peroxiredoxin family.</title>
        <authorList>
            <person name="Verdoucq L."/>
            <person name="Vignols F."/>
            <person name="Jacquot J.-P."/>
            <person name="Chartier Y."/>
            <person name="Meyer Y."/>
        </authorList>
    </citation>
    <scope>NUCLEOTIDE SEQUENCE [MRNA]</scope>
</reference>
<reference key="2">
    <citation type="journal article" date="2000" name="Nature">
        <title>Sequence and analysis of chromosome 1 of the plant Arabidopsis thaliana.</title>
        <authorList>
            <person name="Theologis A."/>
            <person name="Ecker J.R."/>
            <person name="Palm C.J."/>
            <person name="Federspiel N.A."/>
            <person name="Kaul S."/>
            <person name="White O."/>
            <person name="Alonso J."/>
            <person name="Altafi H."/>
            <person name="Araujo R."/>
            <person name="Bowman C.L."/>
            <person name="Brooks S.Y."/>
            <person name="Buehler E."/>
            <person name="Chan A."/>
            <person name="Chao Q."/>
            <person name="Chen H."/>
            <person name="Cheuk R.F."/>
            <person name="Chin C.W."/>
            <person name="Chung M.K."/>
            <person name="Conn L."/>
            <person name="Conway A.B."/>
            <person name="Conway A.R."/>
            <person name="Creasy T.H."/>
            <person name="Dewar K."/>
            <person name="Dunn P."/>
            <person name="Etgu P."/>
            <person name="Feldblyum T.V."/>
            <person name="Feng J.-D."/>
            <person name="Fong B."/>
            <person name="Fujii C.Y."/>
            <person name="Gill J.E."/>
            <person name="Goldsmith A.D."/>
            <person name="Haas B."/>
            <person name="Hansen N.F."/>
            <person name="Hughes B."/>
            <person name="Huizar L."/>
            <person name="Hunter J.L."/>
            <person name="Jenkins J."/>
            <person name="Johnson-Hopson C."/>
            <person name="Khan S."/>
            <person name="Khaykin E."/>
            <person name="Kim C.J."/>
            <person name="Koo H.L."/>
            <person name="Kremenetskaia I."/>
            <person name="Kurtz D.B."/>
            <person name="Kwan A."/>
            <person name="Lam B."/>
            <person name="Langin-Hooper S."/>
            <person name="Lee A."/>
            <person name="Lee J.M."/>
            <person name="Lenz C.A."/>
            <person name="Li J.H."/>
            <person name="Li Y.-P."/>
            <person name="Lin X."/>
            <person name="Liu S.X."/>
            <person name="Liu Z.A."/>
            <person name="Luros J.S."/>
            <person name="Maiti R."/>
            <person name="Marziali A."/>
            <person name="Militscher J."/>
            <person name="Miranda M."/>
            <person name="Nguyen M."/>
            <person name="Nierman W.C."/>
            <person name="Osborne B.I."/>
            <person name="Pai G."/>
            <person name="Peterson J."/>
            <person name="Pham P.K."/>
            <person name="Rizzo M."/>
            <person name="Rooney T."/>
            <person name="Rowley D."/>
            <person name="Sakano H."/>
            <person name="Salzberg S.L."/>
            <person name="Schwartz J.R."/>
            <person name="Shinn P."/>
            <person name="Southwick A.M."/>
            <person name="Sun H."/>
            <person name="Tallon L.J."/>
            <person name="Tambunga G."/>
            <person name="Toriumi M.J."/>
            <person name="Town C.D."/>
            <person name="Utterback T."/>
            <person name="Van Aken S."/>
            <person name="Vaysberg M."/>
            <person name="Vysotskaia V.S."/>
            <person name="Walker M."/>
            <person name="Wu D."/>
            <person name="Yu G."/>
            <person name="Fraser C.M."/>
            <person name="Venter J.C."/>
            <person name="Davis R.W."/>
        </authorList>
    </citation>
    <scope>NUCLEOTIDE SEQUENCE [LARGE SCALE GENOMIC DNA]</scope>
    <source>
        <strain>cv. Columbia</strain>
    </source>
</reference>
<reference key="3">
    <citation type="journal article" date="2017" name="Plant J.">
        <title>Araport11: a complete reannotation of the Arabidopsis thaliana reference genome.</title>
        <authorList>
            <person name="Cheng C.Y."/>
            <person name="Krishnakumar V."/>
            <person name="Chan A.P."/>
            <person name="Thibaud-Nissen F."/>
            <person name="Schobel S."/>
            <person name="Town C.D."/>
        </authorList>
    </citation>
    <scope>GENOME REANNOTATION</scope>
    <source>
        <strain>cv. Columbia</strain>
    </source>
</reference>
<reference key="4">
    <citation type="journal article" date="2003" name="Science">
        <title>Empirical analysis of transcriptional activity in the Arabidopsis genome.</title>
        <authorList>
            <person name="Yamada K."/>
            <person name="Lim J."/>
            <person name="Dale J.M."/>
            <person name="Chen H."/>
            <person name="Shinn P."/>
            <person name="Palm C.J."/>
            <person name="Southwick A.M."/>
            <person name="Wu H.C."/>
            <person name="Kim C.J."/>
            <person name="Nguyen M."/>
            <person name="Pham P.K."/>
            <person name="Cheuk R.F."/>
            <person name="Karlin-Newmann G."/>
            <person name="Liu S.X."/>
            <person name="Lam B."/>
            <person name="Sakano H."/>
            <person name="Wu T."/>
            <person name="Yu G."/>
            <person name="Miranda M."/>
            <person name="Quach H.L."/>
            <person name="Tripp M."/>
            <person name="Chang C.H."/>
            <person name="Lee J.M."/>
            <person name="Toriumi M.J."/>
            <person name="Chan M.M."/>
            <person name="Tang C.C."/>
            <person name="Onodera C.S."/>
            <person name="Deng J.M."/>
            <person name="Akiyama K."/>
            <person name="Ansari Y."/>
            <person name="Arakawa T."/>
            <person name="Banh J."/>
            <person name="Banno F."/>
            <person name="Bowser L."/>
            <person name="Brooks S.Y."/>
            <person name="Carninci P."/>
            <person name="Chao Q."/>
            <person name="Choy N."/>
            <person name="Enju A."/>
            <person name="Goldsmith A.D."/>
            <person name="Gurjal M."/>
            <person name="Hansen N.F."/>
            <person name="Hayashizaki Y."/>
            <person name="Johnson-Hopson C."/>
            <person name="Hsuan V.W."/>
            <person name="Iida K."/>
            <person name="Karnes M."/>
            <person name="Khan S."/>
            <person name="Koesema E."/>
            <person name="Ishida J."/>
            <person name="Jiang P.X."/>
            <person name="Jones T."/>
            <person name="Kawai J."/>
            <person name="Kamiya A."/>
            <person name="Meyers C."/>
            <person name="Nakajima M."/>
            <person name="Narusaka M."/>
            <person name="Seki M."/>
            <person name="Sakurai T."/>
            <person name="Satou M."/>
            <person name="Tamse R."/>
            <person name="Vaysberg M."/>
            <person name="Wallender E.K."/>
            <person name="Wong C."/>
            <person name="Yamamura Y."/>
            <person name="Yuan S."/>
            <person name="Shinozaki K."/>
            <person name="Davis R.W."/>
            <person name="Theologis A."/>
            <person name="Ecker J.R."/>
        </authorList>
    </citation>
    <scope>NUCLEOTIDE SEQUENCE [LARGE SCALE MRNA]</scope>
    <source>
        <strain>cv. Columbia</strain>
    </source>
</reference>
<reference key="5">
    <citation type="journal article" date="2002" name="Plant Physiol. Biochem.">
        <title>Type II peroxiredoxin C, a member of the peroxiredoxin family of Arabidopsis thaliana: its expression and activity in comparison with other peroxiredoxins.</title>
        <authorList>
            <person name="Horling F."/>
            <person name="Koenig J."/>
            <person name="Dietz K.-J."/>
        </authorList>
    </citation>
    <scope>SUBUNIT</scope>
    <scope>TISSUE SPECIFICITY</scope>
    <scope>INDUCTION</scope>
</reference>
<reference key="6">
    <citation type="journal article" date="2003" name="Plant Physiol.">
        <title>Resemblance and dissemblance of Arabidopsis type II peroxiredoxins: similar sequences for divergent gene expression, protein localization, and activity.</title>
        <authorList>
            <person name="Brehelin C."/>
            <person name="Meyer E.H."/>
            <person name="de Souris J.-P."/>
            <person name="Bonnard G."/>
            <person name="Meyer Y."/>
        </authorList>
    </citation>
    <scope>FUNCTION</scope>
    <scope>SUBUNIT</scope>
    <scope>SUBCELLULAR LOCATION</scope>
    <scope>TISSUE SPECIFICITY</scope>
</reference>
<reference key="7">
    <citation type="journal article" date="2005" name="Free Radic. Biol. Med.">
        <title>The plant multigenic family of thiol peroxidases.</title>
        <authorList>
            <person name="Rouhier N."/>
            <person name="Jacquot J.-P."/>
        </authorList>
    </citation>
    <scope>GENE FAMILY ORGANIZATION</scope>
    <scope>NOMENCLATURE</scope>
</reference>
<organism>
    <name type="scientific">Arabidopsis thaliana</name>
    <name type="common">Mouse-ear cress</name>
    <dbReference type="NCBI Taxonomy" id="3702"/>
    <lineage>
        <taxon>Eukaryota</taxon>
        <taxon>Viridiplantae</taxon>
        <taxon>Streptophyta</taxon>
        <taxon>Embryophyta</taxon>
        <taxon>Tracheophyta</taxon>
        <taxon>Spermatophyta</taxon>
        <taxon>Magnoliopsida</taxon>
        <taxon>eudicotyledons</taxon>
        <taxon>Gunneridae</taxon>
        <taxon>Pentapetalae</taxon>
        <taxon>rosids</taxon>
        <taxon>malvids</taxon>
        <taxon>Brassicales</taxon>
        <taxon>Brassicaceae</taxon>
        <taxon>Camelineae</taxon>
        <taxon>Arabidopsis</taxon>
    </lineage>
</organism>
<gene>
    <name type="primary">PRXIIB</name>
    <name type="synonym">TPX1</name>
    <name type="ordered locus">At1g65980</name>
    <name type="ORF">F12P19.14</name>
</gene>
<evidence type="ECO:0000250" key="1">
    <source>
        <dbReference type="UniProtKB" id="A9PCL4"/>
    </source>
</evidence>
<evidence type="ECO:0000255" key="2">
    <source>
        <dbReference type="PROSITE-ProRule" id="PRU00691"/>
    </source>
</evidence>
<evidence type="ECO:0000269" key="3">
    <source>
    </source>
</evidence>
<evidence type="ECO:0000269" key="4">
    <source ref="5"/>
</evidence>
<evidence type="ECO:0000305" key="5"/>
<evidence type="ECO:0000305" key="6">
    <source>
    </source>
</evidence>